<sequence length="502" mass="56742">MKIAVIGAGVTGLAAAARIASQGHEVTIFEKNNNVGGRMNQLKKDGFTFDMGPTIVMMPDVYKDVFTACGKNYEDYIELRQLRYIYDVYFDHDDRITVPTDLAELQQMLESIEPGSTHGFMSFLTDVYKKYEIARRYFLERTYRKPSDFYNMTSLVQGAKLKTLNHADQLIEHYIDNEKIQKLLAFQTLYIGIDPKRGPSLYSIIPMIEMMFGVHFIKGGMYGMAQGLAQLNKDLGVNIELNAEIEQIIIDPKFKRADAIKVNGDIRKFDKILCTADFPSVAESLMPDFAPIKKYPPHKIADLDYSCSAFLMYIGIDIDVTDQVRLHNVIFSDDFRGNIEEIFEGRLSYDPSIYVYVPAVADKSLAPEGKTGIYVLMPTPELKTGSGIDWSDEALTQQIKEIIYRKLATIEVFEDIKSHIVSETIFTPNDFEQTYHAKFGSAFGLMPTLAQSNYYRPQNVSRDYKDLYFAGASTHPGAGVPIVLTSAKITVDEMIKDIERGV</sequence>
<name>CRTN_STAAN</name>
<accession>Q7A3E2</accession>
<organism>
    <name type="scientific">Staphylococcus aureus (strain N315)</name>
    <dbReference type="NCBI Taxonomy" id="158879"/>
    <lineage>
        <taxon>Bacteria</taxon>
        <taxon>Bacillati</taxon>
        <taxon>Bacillota</taxon>
        <taxon>Bacilli</taxon>
        <taxon>Bacillales</taxon>
        <taxon>Staphylococcaceae</taxon>
        <taxon>Staphylococcus</taxon>
    </lineage>
</organism>
<comment type="function">
    <text evidence="1">Involved in the biosynthesis of the yellow-orange carotenoid staphyloxanthin, which plays a role in the virulence via its protective function against oxidative stress. Catalyzes three successive dehydrogenation reactions that lead to the introduction of three double bonds into 4,4'-diapophytoene (dehydrosqualene), with 4,4'-diapophytofluene and 4,4'-diapo-zeta-carotene as intermediates, and 4,4'-diaponeurosporene (the major deep-yellow pigment in staphylococci strains) as the end product.</text>
</comment>
<comment type="catalytic activity">
    <reaction evidence="1">
        <text>15-cis-4,4'-diapophytoene + 3 FAD + 3 H(+) = all-trans-4,4'-diaponeurosporene + 3 FADH2</text>
        <dbReference type="Rhea" id="RHEA:42800"/>
        <dbReference type="ChEBI" id="CHEBI:15378"/>
        <dbReference type="ChEBI" id="CHEBI:57692"/>
        <dbReference type="ChEBI" id="CHEBI:58307"/>
        <dbReference type="ChEBI" id="CHEBI:62738"/>
        <dbReference type="ChEBI" id="CHEBI:62743"/>
    </reaction>
</comment>
<comment type="pathway">
    <text evidence="1">Carotenoid biosynthesis; staphyloxanthin biosynthesis; staphyloxanthin from farnesyl diphosphate: step 2/5.</text>
</comment>
<comment type="similarity">
    <text evidence="3">Belongs to the carotenoid/retinoid oxidoreductase family. CrtN subfamily.</text>
</comment>
<evidence type="ECO:0000250" key="1">
    <source>
        <dbReference type="UniProtKB" id="O07855"/>
    </source>
</evidence>
<evidence type="ECO:0000255" key="2"/>
<evidence type="ECO:0000305" key="3"/>
<dbReference type="EC" id="1.3.8.-" evidence="1"/>
<dbReference type="EMBL" id="BA000018">
    <property type="protein sequence ID" value="BAB43652.1"/>
    <property type="molecule type" value="Genomic_DNA"/>
</dbReference>
<dbReference type="PIR" id="B90061">
    <property type="entry name" value="B90061"/>
</dbReference>
<dbReference type="RefSeq" id="WP_000686168.1">
    <property type="nucleotide sequence ID" value="NC_002745.2"/>
</dbReference>
<dbReference type="SMR" id="Q7A3E2"/>
<dbReference type="EnsemblBacteria" id="BAB43652">
    <property type="protein sequence ID" value="BAB43652"/>
    <property type="gene ID" value="BAB43652"/>
</dbReference>
<dbReference type="KEGG" id="sau:SA2348"/>
<dbReference type="HOGENOM" id="CLU_019722_2_1_9"/>
<dbReference type="UniPathway" id="UPA00029">
    <property type="reaction ID" value="UER00557"/>
</dbReference>
<dbReference type="GO" id="GO:0102223">
    <property type="term" value="F:4,4'-diapophytoene desaturase (4,4'-diaponeurosporene-forming)"/>
    <property type="evidence" value="ECO:0007669"/>
    <property type="project" value="RHEA"/>
</dbReference>
<dbReference type="GO" id="GO:0016117">
    <property type="term" value="P:carotenoid biosynthetic process"/>
    <property type="evidence" value="ECO:0007669"/>
    <property type="project" value="UniProtKB-KW"/>
</dbReference>
<dbReference type="Gene3D" id="3.50.50.60">
    <property type="entry name" value="FAD/NAD(P)-binding domain"/>
    <property type="match status" value="2"/>
</dbReference>
<dbReference type="InterPro" id="IPR002937">
    <property type="entry name" value="Amino_oxidase"/>
</dbReference>
<dbReference type="InterPro" id="IPR014105">
    <property type="entry name" value="Carotenoid/retinoid_OxRdtase"/>
</dbReference>
<dbReference type="InterPro" id="IPR036188">
    <property type="entry name" value="FAD/NAD-bd_sf"/>
</dbReference>
<dbReference type="NCBIfam" id="TIGR02734">
    <property type="entry name" value="crtI_fam"/>
    <property type="match status" value="1"/>
</dbReference>
<dbReference type="PANTHER" id="PTHR43734">
    <property type="entry name" value="PHYTOENE DESATURASE"/>
    <property type="match status" value="1"/>
</dbReference>
<dbReference type="PANTHER" id="PTHR43734:SF1">
    <property type="entry name" value="PHYTOENE DESATURASE"/>
    <property type="match status" value="1"/>
</dbReference>
<dbReference type="Pfam" id="PF01593">
    <property type="entry name" value="Amino_oxidase"/>
    <property type="match status" value="1"/>
</dbReference>
<dbReference type="PRINTS" id="PR00419">
    <property type="entry name" value="ADXRDTASE"/>
</dbReference>
<dbReference type="SUPFAM" id="SSF51905">
    <property type="entry name" value="FAD/NAD(P)-binding domain"/>
    <property type="match status" value="1"/>
</dbReference>
<keyword id="KW-0125">Carotenoid biosynthesis</keyword>
<keyword id="KW-0274">FAD</keyword>
<keyword id="KW-0285">Flavoprotein</keyword>
<keyword id="KW-0560">Oxidoreductase</keyword>
<keyword id="KW-0843">Virulence</keyword>
<protein>
    <recommendedName>
        <fullName evidence="1">4,4'-diapophytoene desaturase (4,4'-diaponeurosporene-forming)</fullName>
        <ecNumber evidence="1">1.3.8.-</ecNumber>
    </recommendedName>
    <alternativeName>
        <fullName evidence="1">Dehydrosqualene desaturase</fullName>
    </alternativeName>
</protein>
<proteinExistence type="evidence at protein level"/>
<reference key="1">
    <citation type="journal article" date="2001" name="Lancet">
        <title>Whole genome sequencing of meticillin-resistant Staphylococcus aureus.</title>
        <authorList>
            <person name="Kuroda M."/>
            <person name="Ohta T."/>
            <person name="Uchiyama I."/>
            <person name="Baba T."/>
            <person name="Yuzawa H."/>
            <person name="Kobayashi I."/>
            <person name="Cui L."/>
            <person name="Oguchi A."/>
            <person name="Aoki K."/>
            <person name="Nagai Y."/>
            <person name="Lian J.-Q."/>
            <person name="Ito T."/>
            <person name="Kanamori M."/>
            <person name="Matsumaru H."/>
            <person name="Maruyama A."/>
            <person name="Murakami H."/>
            <person name="Hosoyama A."/>
            <person name="Mizutani-Ui Y."/>
            <person name="Takahashi N.K."/>
            <person name="Sawano T."/>
            <person name="Inoue R."/>
            <person name="Kaito C."/>
            <person name="Sekimizu K."/>
            <person name="Hirakawa H."/>
            <person name="Kuhara S."/>
            <person name="Goto S."/>
            <person name="Yabuzaki J."/>
            <person name="Kanehisa M."/>
            <person name="Yamashita A."/>
            <person name="Oshima K."/>
            <person name="Furuya K."/>
            <person name="Yoshino C."/>
            <person name="Shiba T."/>
            <person name="Hattori M."/>
            <person name="Ogasawara N."/>
            <person name="Hayashi H."/>
            <person name="Hiramatsu K."/>
        </authorList>
    </citation>
    <scope>NUCLEOTIDE SEQUENCE [LARGE SCALE GENOMIC DNA]</scope>
    <source>
        <strain>N315</strain>
    </source>
</reference>
<reference key="2">
    <citation type="submission" date="2007-10" db="UniProtKB">
        <title>Shotgun proteomic analysis of total and membrane protein extracts of S. aureus strain N315.</title>
        <authorList>
            <person name="Vaezzadeh A.R."/>
            <person name="Deshusses J."/>
            <person name="Lescuyer P."/>
            <person name="Hochstrasser D.F."/>
        </authorList>
    </citation>
    <scope>IDENTIFICATION BY MASS SPECTROMETRY [LARGE SCALE ANALYSIS]</scope>
    <source>
        <strain>N315</strain>
    </source>
</reference>
<feature type="chain" id="PRO_0000272195" description="4,4'-diapophytoene desaturase (4,4'-diaponeurosporene-forming)">
    <location>
        <begin position="1"/>
        <end position="502"/>
    </location>
</feature>
<feature type="binding site" evidence="2">
    <location>
        <begin position="5"/>
        <end position="17"/>
    </location>
    <ligand>
        <name>FAD</name>
        <dbReference type="ChEBI" id="CHEBI:57692"/>
    </ligand>
</feature>
<gene>
    <name evidence="1" type="primary">crtN</name>
    <name type="ordered locus">SA2348</name>
</gene>